<keyword id="KW-0687">Ribonucleoprotein</keyword>
<keyword id="KW-0689">Ribosomal protein</keyword>
<keyword id="KW-0694">RNA-binding</keyword>
<keyword id="KW-0699">rRNA-binding</keyword>
<feature type="chain" id="PRO_1000141937" description="Large ribosomal subunit protein uL3">
    <location>
        <begin position="1"/>
        <end position="207"/>
    </location>
</feature>
<proteinExistence type="inferred from homology"/>
<reference key="1">
    <citation type="journal article" date="2011" name="J. Bacteriol.">
        <title>Genome sequence of Thermotoga sp. strain RQ2, a hyperthermophilic bacterium isolated from a geothermally heated region of the seafloor near Ribeira Quente, the Azores.</title>
        <authorList>
            <person name="Swithers K.S."/>
            <person name="DiPippo J.L."/>
            <person name="Bruce D.C."/>
            <person name="Detter C."/>
            <person name="Tapia R."/>
            <person name="Han S."/>
            <person name="Saunders E."/>
            <person name="Goodwin L.A."/>
            <person name="Han J."/>
            <person name="Woyke T."/>
            <person name="Pitluck S."/>
            <person name="Pennacchio L."/>
            <person name="Nolan M."/>
            <person name="Mikhailova N."/>
            <person name="Lykidis A."/>
            <person name="Land M.L."/>
            <person name="Brettin T."/>
            <person name="Stetter K.O."/>
            <person name="Nelson K.E."/>
            <person name="Gogarten J.P."/>
            <person name="Noll K.M."/>
        </authorList>
    </citation>
    <scope>NUCLEOTIDE SEQUENCE [LARGE SCALE GENOMIC DNA]</scope>
    <source>
        <strain>RQ2</strain>
    </source>
</reference>
<comment type="function">
    <text evidence="1">One of the primary rRNA binding proteins, it binds directly near the 3'-end of the 23S rRNA, where it nucleates assembly of the 50S subunit.</text>
</comment>
<comment type="subunit">
    <text evidence="1">Part of the 50S ribosomal subunit. Forms a cluster with proteins L14 and L19.</text>
</comment>
<comment type="similarity">
    <text evidence="1">Belongs to the universal ribosomal protein uL3 family.</text>
</comment>
<name>RL3_THESQ</name>
<sequence>MKMIIGRKIGMTRVFVGNDSVPVTVIKAGPCVVVQKKTVEKDGYNAVQLGFEKAKKVNKPLAGHFKKFGVEPMKILREFRVENPDEYEPGQVIKVDVFEKGEYVDVTGWTKGRGFAGAMKRWGFSGGPKSHGSKFHRELGSVGQHTEPAKIWKGKKMPGRYGNERVTVRNLQVVDIDPENDLLVVKGGVPGARGGLVLIRSAKAPKK</sequence>
<protein>
    <recommendedName>
        <fullName evidence="1">Large ribosomal subunit protein uL3</fullName>
    </recommendedName>
    <alternativeName>
        <fullName evidence="2">50S ribosomal protein L3</fullName>
    </alternativeName>
</protein>
<gene>
    <name evidence="1" type="primary">rplC</name>
    <name type="ordered locus">TRQ2_1394</name>
</gene>
<organism>
    <name type="scientific">Thermotoga sp. (strain RQ2)</name>
    <dbReference type="NCBI Taxonomy" id="126740"/>
    <lineage>
        <taxon>Bacteria</taxon>
        <taxon>Thermotogati</taxon>
        <taxon>Thermotogota</taxon>
        <taxon>Thermotogae</taxon>
        <taxon>Thermotogales</taxon>
        <taxon>Thermotogaceae</taxon>
        <taxon>Thermotoga</taxon>
    </lineage>
</organism>
<evidence type="ECO:0000255" key="1">
    <source>
        <dbReference type="HAMAP-Rule" id="MF_01325"/>
    </source>
</evidence>
<evidence type="ECO:0000305" key="2"/>
<accession>B1LBP0</accession>
<dbReference type="EMBL" id="CP000969">
    <property type="protein sequence ID" value="ACB09738.1"/>
    <property type="molecule type" value="Genomic_DNA"/>
</dbReference>
<dbReference type="RefSeq" id="WP_004081835.1">
    <property type="nucleotide sequence ID" value="NC_010483.1"/>
</dbReference>
<dbReference type="SMR" id="B1LBP0"/>
<dbReference type="KEGG" id="trq:TRQ2_1394"/>
<dbReference type="HOGENOM" id="CLU_044142_4_1_0"/>
<dbReference type="Proteomes" id="UP000001687">
    <property type="component" value="Chromosome"/>
</dbReference>
<dbReference type="GO" id="GO:0022625">
    <property type="term" value="C:cytosolic large ribosomal subunit"/>
    <property type="evidence" value="ECO:0007669"/>
    <property type="project" value="TreeGrafter"/>
</dbReference>
<dbReference type="GO" id="GO:0019843">
    <property type="term" value="F:rRNA binding"/>
    <property type="evidence" value="ECO:0007669"/>
    <property type="project" value="UniProtKB-UniRule"/>
</dbReference>
<dbReference type="GO" id="GO:0003735">
    <property type="term" value="F:structural constituent of ribosome"/>
    <property type="evidence" value="ECO:0007669"/>
    <property type="project" value="InterPro"/>
</dbReference>
<dbReference type="GO" id="GO:0006412">
    <property type="term" value="P:translation"/>
    <property type="evidence" value="ECO:0007669"/>
    <property type="project" value="UniProtKB-UniRule"/>
</dbReference>
<dbReference type="FunFam" id="2.40.30.10:FF:000004">
    <property type="entry name" value="50S ribosomal protein L3"/>
    <property type="match status" value="1"/>
</dbReference>
<dbReference type="FunFam" id="3.30.160.810:FF:000001">
    <property type="entry name" value="50S ribosomal protein L3"/>
    <property type="match status" value="1"/>
</dbReference>
<dbReference type="Gene3D" id="3.30.160.810">
    <property type="match status" value="1"/>
</dbReference>
<dbReference type="Gene3D" id="2.40.30.10">
    <property type="entry name" value="Translation factors"/>
    <property type="match status" value="1"/>
</dbReference>
<dbReference type="HAMAP" id="MF_01325_B">
    <property type="entry name" value="Ribosomal_uL3_B"/>
    <property type="match status" value="1"/>
</dbReference>
<dbReference type="InterPro" id="IPR000597">
    <property type="entry name" value="Ribosomal_uL3"/>
</dbReference>
<dbReference type="InterPro" id="IPR019927">
    <property type="entry name" value="Ribosomal_uL3_bac/org-type"/>
</dbReference>
<dbReference type="InterPro" id="IPR019926">
    <property type="entry name" value="Ribosomal_uL3_CS"/>
</dbReference>
<dbReference type="InterPro" id="IPR009000">
    <property type="entry name" value="Transl_B-barrel_sf"/>
</dbReference>
<dbReference type="NCBIfam" id="TIGR03625">
    <property type="entry name" value="L3_bact"/>
    <property type="match status" value="1"/>
</dbReference>
<dbReference type="PANTHER" id="PTHR11229">
    <property type="entry name" value="50S RIBOSOMAL PROTEIN L3"/>
    <property type="match status" value="1"/>
</dbReference>
<dbReference type="PANTHER" id="PTHR11229:SF16">
    <property type="entry name" value="LARGE RIBOSOMAL SUBUNIT PROTEIN UL3C"/>
    <property type="match status" value="1"/>
</dbReference>
<dbReference type="Pfam" id="PF00297">
    <property type="entry name" value="Ribosomal_L3"/>
    <property type="match status" value="1"/>
</dbReference>
<dbReference type="SUPFAM" id="SSF50447">
    <property type="entry name" value="Translation proteins"/>
    <property type="match status" value="1"/>
</dbReference>
<dbReference type="PROSITE" id="PS00474">
    <property type="entry name" value="RIBOSOMAL_L3"/>
    <property type="match status" value="1"/>
</dbReference>